<comment type="function">
    <text evidence="2 3 4">Dual cyclooxygenase and peroxidase in the biosynthesis pathway of prostanoids, a class of C20 oxylipins mainly derived from arachidonate ((5Z,8Z,11Z,14Z)-eicosatetraenoate, AA, C20:4(n-6)), with a particular role in the inflammatory response. The cyclooxygenase activity oxygenates AA to the hydroperoxy endoperoxide prostaglandin G2 (PGG2), and the peroxidase activity reduces PGG2 to the hydroxy endoperoxide prostaglandin H2 (PGH2), the precursor of all 2-series prostaglandins and thromboxanes. This complex transformation is initiated by abstraction of hydrogen at carbon 13 (with S-stereochemistry), followed by insertion of molecular O2 to form the endoperoxide bridge between carbon 9 and 11 that defines prostaglandins. The insertion of a second molecule of O2 (bis-oxygenase activity) yields a hydroperoxy group in PGG2 that is then reduced to PGH2 by two electrons. Similarly catalyzes successive cyclooxygenation and peroxidation of dihomo-gamma-linoleate (DGLA, C20:3(n-6)) and eicosapentaenoate (EPA, C20:5(n-3)) to corresponding PGH1 and PGH3, the precursors of 1- and 3-series prostaglandins. In an alternative pathway of prostanoid biosynthesis, converts 2-arachidonoyl lysophopholipids to prostanoid lysophopholipids, which are then hydrolyzed by intracellular phospholipases to release free prostanoids. Metabolizes 2-arachidonoyl glycerol yielding the glyceryl ester of PGH2, a process that can contribute to pain response. Generates lipid mediators from n-3 and n-6 polyunsaturated fatty acids (PUFAs) via a lipoxygenase-type mechanism. Oxygenates PUFAs to hydroperoxy compounds and then reduces them to corresponding alcohols. Plays a role in the generation of resolution phase interaction products (resolvins) during both sterile and infectious inflammation. Metabolizes docosahexaenoate (DHA, C22:6(n-3)) to 17R-HDHA, a precursor of the D-series resolvins (RvDs). As a component of the biosynthetic pathway of E-series resolvins (RvEs), converts eicosapentaenoate (EPA, C20:5(n-3)) primarily to 18S-HEPE that is further metabolized by ALOX5 and LTA4H to generate 18S-RvE1 and 18S-RvE2. In vascular endothelial cells, converts docosapentaenoate (DPA, C22:5(n-3)) to 13R-HDPA, a precursor for 13-series resolvins (RvTs) shown to activate macrophage phagocytosis during bacterial infection. In activated leukocytes, contributes to oxygenation of hydroxyeicosatetraenoates (HETE) to diHETES (5,15-diHETE and 5,11-diHETE). Can also use linoleate (LA, (9Z,12Z)-octadecadienoate, C18:2(n-6)) as substrate and produce hydroxyoctadecadienoates (HODEs) in a regio- and stereospecific manner, being (9R)-HODE ((9R)-hydroxy-(10E,12Z)-octadecadienoate) and (13S)-HODE ((13S)-hydroxy-(9Z,11E)-octadecadienoate) its major products (By similarity). During neuroinflammation, plays a role in neuronal secretion of specialized preresolving mediators (SPMs) 15R-lipoxin A4 that regulates phagocytic microglia (By similarity).</text>
</comment>
<comment type="catalytic activity">
    <reaction evidence="2">
        <text>(5Z,8Z,11Z,14Z)-eicosatetraenoate + AH2 + 2 O2 = prostaglandin H2 + A + H2O</text>
        <dbReference type="Rhea" id="RHEA:23728"/>
        <dbReference type="ChEBI" id="CHEBI:13193"/>
        <dbReference type="ChEBI" id="CHEBI:15377"/>
        <dbReference type="ChEBI" id="CHEBI:15379"/>
        <dbReference type="ChEBI" id="CHEBI:17499"/>
        <dbReference type="ChEBI" id="CHEBI:32395"/>
        <dbReference type="ChEBI" id="CHEBI:57405"/>
        <dbReference type="EC" id="1.14.99.1"/>
    </reaction>
    <physiologicalReaction direction="left-to-right" evidence="2">
        <dbReference type="Rhea" id="RHEA:23729"/>
    </physiologicalReaction>
</comment>
<comment type="catalytic activity">
    <reaction evidence="2">
        <text>(5Z,8Z,11Z,14Z)-eicosatetraenoate + 2 O2 = prostaglandin G2</text>
        <dbReference type="Rhea" id="RHEA:42596"/>
        <dbReference type="ChEBI" id="CHEBI:15379"/>
        <dbReference type="ChEBI" id="CHEBI:32395"/>
        <dbReference type="ChEBI" id="CHEBI:82629"/>
    </reaction>
    <physiologicalReaction direction="left-to-right" evidence="2">
        <dbReference type="Rhea" id="RHEA:42597"/>
    </physiologicalReaction>
</comment>
<comment type="catalytic activity">
    <reaction evidence="2">
        <text>prostaglandin G2 + AH2 = prostaglandin H2 + A + H2O</text>
        <dbReference type="Rhea" id="RHEA:42600"/>
        <dbReference type="ChEBI" id="CHEBI:13193"/>
        <dbReference type="ChEBI" id="CHEBI:15377"/>
        <dbReference type="ChEBI" id="CHEBI:17499"/>
        <dbReference type="ChEBI" id="CHEBI:57405"/>
        <dbReference type="ChEBI" id="CHEBI:82629"/>
    </reaction>
    <physiologicalReaction direction="left-to-right" evidence="2">
        <dbReference type="Rhea" id="RHEA:42601"/>
    </physiologicalReaction>
</comment>
<comment type="catalytic activity">
    <reaction evidence="2">
        <text>(5Z,8Z,11Z,14Z,17Z)-eicosapentaenoate + 2 O2 = prostaglandin G3</text>
        <dbReference type="Rhea" id="RHEA:50444"/>
        <dbReference type="ChEBI" id="CHEBI:15379"/>
        <dbReference type="ChEBI" id="CHEBI:58562"/>
        <dbReference type="ChEBI" id="CHEBI:133133"/>
    </reaction>
    <physiologicalReaction direction="left-to-right" evidence="2">
        <dbReference type="Rhea" id="RHEA:50445"/>
    </physiologicalReaction>
</comment>
<comment type="catalytic activity">
    <reaction evidence="2">
        <text>prostaglandin G3 + AH2 = prostaglandin H3 + A + H2O</text>
        <dbReference type="Rhea" id="RHEA:50448"/>
        <dbReference type="ChEBI" id="CHEBI:13193"/>
        <dbReference type="ChEBI" id="CHEBI:15377"/>
        <dbReference type="ChEBI" id="CHEBI:17499"/>
        <dbReference type="ChEBI" id="CHEBI:133133"/>
        <dbReference type="ChEBI" id="CHEBI:133134"/>
    </reaction>
    <physiologicalReaction direction="left-to-right" evidence="2">
        <dbReference type="Rhea" id="RHEA:50449"/>
    </physiologicalReaction>
</comment>
<comment type="catalytic activity">
    <reaction evidence="2">
        <text>(8Z,11Z,14Z)-eicosatrienoate + 2 O2 = prostaglandin G1</text>
        <dbReference type="Rhea" id="RHEA:50424"/>
        <dbReference type="ChEBI" id="CHEBI:15379"/>
        <dbReference type="ChEBI" id="CHEBI:71589"/>
        <dbReference type="ChEBI" id="CHEBI:133084"/>
    </reaction>
    <physiologicalReaction direction="left-to-right" evidence="2">
        <dbReference type="Rhea" id="RHEA:50425"/>
    </physiologicalReaction>
</comment>
<comment type="catalytic activity">
    <reaction evidence="2">
        <text>prostaglandin G1 + AH2 = prostaglandin H1 + A + H2O</text>
        <dbReference type="Rhea" id="RHEA:50432"/>
        <dbReference type="ChEBI" id="CHEBI:13193"/>
        <dbReference type="ChEBI" id="CHEBI:15377"/>
        <dbReference type="ChEBI" id="CHEBI:17499"/>
        <dbReference type="ChEBI" id="CHEBI:90793"/>
        <dbReference type="ChEBI" id="CHEBI:133084"/>
    </reaction>
    <physiologicalReaction direction="left-to-right" evidence="2">
        <dbReference type="Rhea" id="RHEA:50433"/>
    </physiologicalReaction>
</comment>
<comment type="catalytic activity">
    <reaction evidence="2">
        <text>2-(5Z,8Z,11Z,14Z)-eicosatetraenoyl-sn-glycero-3-phosphoethanolamine + 2 O2 = 2-(prostaglandin G2)-sn-glycero-3-phosphoethanolamine</text>
        <dbReference type="Rhea" id="RHEA:54204"/>
        <dbReference type="ChEBI" id="CHEBI:15379"/>
        <dbReference type="ChEBI" id="CHEBI:76091"/>
        <dbReference type="ChEBI" id="CHEBI:138098"/>
    </reaction>
    <physiologicalReaction direction="left-to-right" evidence="2">
        <dbReference type="Rhea" id="RHEA:54205"/>
    </physiologicalReaction>
</comment>
<comment type="catalytic activity">
    <reaction evidence="2">
        <text>2-(prostaglandin G2)-sn-glycero-3-phosphoethanolamine + AH2 = 2-(prostaglandin H2)-sn-glycero-3-phosphoethanolamine + A + H2O</text>
        <dbReference type="Rhea" id="RHEA:54208"/>
        <dbReference type="ChEBI" id="CHEBI:13193"/>
        <dbReference type="ChEBI" id="CHEBI:15377"/>
        <dbReference type="ChEBI" id="CHEBI:17499"/>
        <dbReference type="ChEBI" id="CHEBI:138098"/>
        <dbReference type="ChEBI" id="CHEBI:138099"/>
    </reaction>
    <physiologicalReaction direction="left-to-right" evidence="2">
        <dbReference type="Rhea" id="RHEA:54209"/>
    </physiologicalReaction>
</comment>
<comment type="catalytic activity">
    <reaction evidence="2">
        <text>2-(5Z,8Z,11Z,14Z)-eicosatetraenoyl-sn-glycero-3-phosphocholine + 2 O2 = 2-(prostaglandin G2)-sn-glycero-3-phosphocholine</text>
        <dbReference type="Rhea" id="RHEA:54212"/>
        <dbReference type="ChEBI" id="CHEBI:15379"/>
        <dbReference type="ChEBI" id="CHEBI:76079"/>
        <dbReference type="ChEBI" id="CHEBI:138100"/>
    </reaction>
    <physiologicalReaction direction="left-to-right" evidence="2">
        <dbReference type="Rhea" id="RHEA:54213"/>
    </physiologicalReaction>
</comment>
<comment type="catalytic activity">
    <reaction evidence="2">
        <text>2-(prostaglandin G2)-sn-glycero-3-phosphocholine + AH2 = 2-(prostaglandin H2)-sn-glycero-3-phosphocholine + A + H2O</text>
        <dbReference type="Rhea" id="RHEA:54216"/>
        <dbReference type="ChEBI" id="CHEBI:13193"/>
        <dbReference type="ChEBI" id="CHEBI:15377"/>
        <dbReference type="ChEBI" id="CHEBI:17499"/>
        <dbReference type="ChEBI" id="CHEBI:138100"/>
        <dbReference type="ChEBI" id="CHEBI:138101"/>
    </reaction>
    <physiologicalReaction direction="left-to-right" evidence="2">
        <dbReference type="Rhea" id="RHEA:54217"/>
    </physiologicalReaction>
</comment>
<comment type="catalytic activity">
    <reaction evidence="2">
        <text>(15S)-hydroperoxy-(5Z,8Z,11Z,13E)-eicosatetraenoate + AH2 = (15S)-hydroxy-(5Z,8Z,11Z,13E)-eicosatetraenoate + A + H2O</text>
        <dbReference type="Rhea" id="RHEA:48856"/>
        <dbReference type="ChEBI" id="CHEBI:13193"/>
        <dbReference type="ChEBI" id="CHEBI:15377"/>
        <dbReference type="ChEBI" id="CHEBI:17499"/>
        <dbReference type="ChEBI" id="CHEBI:57409"/>
        <dbReference type="ChEBI" id="CHEBI:57446"/>
    </reaction>
    <physiologicalReaction direction="left-to-right" evidence="2">
        <dbReference type="Rhea" id="RHEA:48857"/>
    </physiologicalReaction>
</comment>
<comment type="catalytic activity">
    <reaction evidence="2">
        <text>2-(5Z,8Z,11Z,14Z)-eicosatetraenoyl-sn-glycero-3-phosphocholine + AH2 + O2 = 2-[(15S)-hydroxy-(5Z,8Z,11Z,13E)-eicosatetraenoyl]-sn-glycero-3-phosphocholine + A + H2O</text>
        <dbReference type="Rhea" id="RHEA:53684"/>
        <dbReference type="ChEBI" id="CHEBI:13193"/>
        <dbReference type="ChEBI" id="CHEBI:15377"/>
        <dbReference type="ChEBI" id="CHEBI:15379"/>
        <dbReference type="ChEBI" id="CHEBI:17499"/>
        <dbReference type="ChEBI" id="CHEBI:76079"/>
        <dbReference type="ChEBI" id="CHEBI:137584"/>
    </reaction>
    <physiologicalReaction direction="left-to-right" evidence="2">
        <dbReference type="Rhea" id="RHEA:53685"/>
    </physiologicalReaction>
</comment>
<comment type="catalytic activity">
    <reaction evidence="2">
        <text>2-(5Z,8Z,11Z,14Z)-eicosatetraenoyl-sn-glycero-3-phosphocholine + AH2 + O2 = 2-[(15R)-hydroxy-(5Z,8Z,11Z,13E)-eicosatetraenoyl]-sn-glycero-3-phosphocholine + A + H2O</text>
        <dbReference type="Rhea" id="RHEA:53680"/>
        <dbReference type="ChEBI" id="CHEBI:13193"/>
        <dbReference type="ChEBI" id="CHEBI:15377"/>
        <dbReference type="ChEBI" id="CHEBI:15379"/>
        <dbReference type="ChEBI" id="CHEBI:17499"/>
        <dbReference type="ChEBI" id="CHEBI:76079"/>
        <dbReference type="ChEBI" id="CHEBI:137583"/>
    </reaction>
    <physiologicalReaction direction="left-to-right" evidence="2">
        <dbReference type="Rhea" id="RHEA:53681"/>
    </physiologicalReaction>
</comment>
<comment type="catalytic activity">
    <reaction evidence="2">
        <text>2-(5Z,8Z,11Z,14Z)-eicosatetraenoyl-sn-glycero-3-phosphocholine + AH2 + O2 = 2-[(11R)-hydroxy-(5Z,8Z,12E,14Z)-eicosatetraenoyl]-sn-glycero-3-phosphocholine + A + H2O</text>
        <dbReference type="Rhea" id="RHEA:53676"/>
        <dbReference type="ChEBI" id="CHEBI:13193"/>
        <dbReference type="ChEBI" id="CHEBI:15377"/>
        <dbReference type="ChEBI" id="CHEBI:15379"/>
        <dbReference type="ChEBI" id="CHEBI:17499"/>
        <dbReference type="ChEBI" id="CHEBI:76079"/>
        <dbReference type="ChEBI" id="CHEBI:137582"/>
    </reaction>
    <physiologicalReaction direction="left-to-right" evidence="2">
        <dbReference type="Rhea" id="RHEA:53677"/>
    </physiologicalReaction>
</comment>
<comment type="catalytic activity">
    <reaction evidence="2">
        <text>(9Z,12Z)-octadecadienoate + AH2 + O2 = 9-hydroxy-(10E,12Z)-octadecadienoate + A + H2O</text>
        <dbReference type="Rhea" id="RHEA:50864"/>
        <dbReference type="ChEBI" id="CHEBI:13193"/>
        <dbReference type="ChEBI" id="CHEBI:15377"/>
        <dbReference type="ChEBI" id="CHEBI:15379"/>
        <dbReference type="ChEBI" id="CHEBI:17499"/>
        <dbReference type="ChEBI" id="CHEBI:30245"/>
        <dbReference type="ChEBI" id="CHEBI:133820"/>
    </reaction>
    <physiologicalReaction direction="left-to-right" evidence="2">
        <dbReference type="Rhea" id="RHEA:50865"/>
    </physiologicalReaction>
</comment>
<comment type="catalytic activity">
    <reaction evidence="2">
        <text>(9Z,12Z)-octadecadienoate + AH2 + O2 = 13-hydroxy-(9Z,11E)-octadecadienoate + A + H2O</text>
        <dbReference type="Rhea" id="RHEA:50860"/>
        <dbReference type="ChEBI" id="CHEBI:13193"/>
        <dbReference type="ChEBI" id="CHEBI:15377"/>
        <dbReference type="ChEBI" id="CHEBI:15379"/>
        <dbReference type="ChEBI" id="CHEBI:17499"/>
        <dbReference type="ChEBI" id="CHEBI:30245"/>
        <dbReference type="ChEBI" id="CHEBI:133819"/>
    </reaction>
    <physiologicalReaction direction="left-to-right" evidence="2">
        <dbReference type="Rhea" id="RHEA:50861"/>
    </physiologicalReaction>
</comment>
<comment type="catalytic activity">
    <reaction evidence="2">
        <text>(5Z,8Z,11Z,14Z)-eicosatetraenoate + AH2 + O2 = (15R)-hydroxy-(5Z,8Z,11Z,13E)-eicosatetraenoate + A + H2O</text>
        <dbReference type="Rhea" id="RHEA:50856"/>
        <dbReference type="ChEBI" id="CHEBI:13193"/>
        <dbReference type="ChEBI" id="CHEBI:15377"/>
        <dbReference type="ChEBI" id="CHEBI:15379"/>
        <dbReference type="ChEBI" id="CHEBI:17499"/>
        <dbReference type="ChEBI" id="CHEBI:32395"/>
        <dbReference type="ChEBI" id="CHEBI:78837"/>
    </reaction>
    <physiologicalReaction direction="left-to-right" evidence="2">
        <dbReference type="Rhea" id="RHEA:50857"/>
    </physiologicalReaction>
</comment>
<comment type="catalytic activity">
    <reaction evidence="2">
        <text>(5Z,8Z,11Z,14Z)-eicosatetraenoate + AH2 + O2 = (11R)-hydroxy-(5Z,8Z,12E,14Z)-eicosatetraenoate + A + H2O</text>
        <dbReference type="Rhea" id="RHEA:50852"/>
        <dbReference type="ChEBI" id="CHEBI:13193"/>
        <dbReference type="ChEBI" id="CHEBI:15377"/>
        <dbReference type="ChEBI" id="CHEBI:15379"/>
        <dbReference type="ChEBI" id="CHEBI:17499"/>
        <dbReference type="ChEBI" id="CHEBI:32395"/>
        <dbReference type="ChEBI" id="CHEBI:78836"/>
    </reaction>
    <physiologicalReaction direction="left-to-right" evidence="2">
        <dbReference type="Rhea" id="RHEA:50853"/>
    </physiologicalReaction>
</comment>
<comment type="catalytic activity">
    <reaction evidence="2">
        <text>(5Z,8Z,11Z,14Z,17Z)-eicosapentaenoate + AH2 + O2 = (11R)-hydroxy-(5Z,8Z,12E,14Z,17Z)-eicosapentaenoate + A + H2O</text>
        <dbReference type="Rhea" id="RHEA:50848"/>
        <dbReference type="ChEBI" id="CHEBI:13193"/>
        <dbReference type="ChEBI" id="CHEBI:15377"/>
        <dbReference type="ChEBI" id="CHEBI:15379"/>
        <dbReference type="ChEBI" id="CHEBI:17499"/>
        <dbReference type="ChEBI" id="CHEBI:58562"/>
        <dbReference type="ChEBI" id="CHEBI:90820"/>
    </reaction>
    <physiologicalReaction direction="left-to-right" evidence="2">
        <dbReference type="Rhea" id="RHEA:50849"/>
    </physiologicalReaction>
</comment>
<comment type="catalytic activity">
    <reaction evidence="2">
        <text>(5Z,8Z,11Z,14Z,17Z)-eicosapentaenoate + AH2 + O2 = (18S)-hydroxy-(5Z,8Z,11Z,14Z,16E)-eicosapentaenoate + A + H2O</text>
        <dbReference type="Rhea" id="RHEA:50200"/>
        <dbReference type="ChEBI" id="CHEBI:13193"/>
        <dbReference type="ChEBI" id="CHEBI:15377"/>
        <dbReference type="ChEBI" id="CHEBI:15379"/>
        <dbReference type="ChEBI" id="CHEBI:17499"/>
        <dbReference type="ChEBI" id="CHEBI:58562"/>
        <dbReference type="ChEBI" id="CHEBI:132083"/>
    </reaction>
    <physiologicalReaction direction="left-to-right" evidence="2">
        <dbReference type="Rhea" id="RHEA:50201"/>
    </physiologicalReaction>
</comment>
<comment type="catalytic activity">
    <reaction evidence="2">
        <text>(5Z,8Z,11Z,14Z,17Z)-eicosapentaenoate + AH2 + O2 = (18R)-hydroxy-(5Z,8Z,11Z,14Z,16E)-eicosapentaenoate + A + H2O</text>
        <dbReference type="Rhea" id="RHEA:48836"/>
        <dbReference type="ChEBI" id="CHEBI:13193"/>
        <dbReference type="ChEBI" id="CHEBI:15377"/>
        <dbReference type="ChEBI" id="CHEBI:15379"/>
        <dbReference type="ChEBI" id="CHEBI:17499"/>
        <dbReference type="ChEBI" id="CHEBI:58562"/>
        <dbReference type="ChEBI" id="CHEBI:90818"/>
    </reaction>
    <physiologicalReaction direction="left-to-right" evidence="2">
        <dbReference type="Rhea" id="RHEA:48837"/>
    </physiologicalReaction>
</comment>
<comment type="catalytic activity">
    <reaction evidence="2">
        <text>(5Z,8Z,11Z,14Z,17Z)-eicosapentaenoate + AH2 + O2 = (15R)-hydroxy-(5Z,8Z,11Z,13E,17Z)-eicosapentaenoate + A + H2O</text>
        <dbReference type="Rhea" id="RHEA:48840"/>
        <dbReference type="ChEBI" id="CHEBI:13193"/>
        <dbReference type="ChEBI" id="CHEBI:15377"/>
        <dbReference type="ChEBI" id="CHEBI:15379"/>
        <dbReference type="ChEBI" id="CHEBI:17499"/>
        <dbReference type="ChEBI" id="CHEBI:58562"/>
        <dbReference type="ChEBI" id="CHEBI:90819"/>
    </reaction>
    <physiologicalReaction direction="left-to-right" evidence="2">
        <dbReference type="Rhea" id="RHEA:48841"/>
    </physiologicalReaction>
</comment>
<comment type="catalytic activity">
    <reaction evidence="2">
        <text>(5Z,8Z,11Z,14Z,17Z)-eicosapentaenoate + AH2 + O2 = (15S)-hydroxy-(5Z,8Z,11Z,13E,17Z)-eicosapentaenoate + A + H2O</text>
        <dbReference type="Rhea" id="RHEA:50196"/>
        <dbReference type="ChEBI" id="CHEBI:13193"/>
        <dbReference type="ChEBI" id="CHEBI:15377"/>
        <dbReference type="ChEBI" id="CHEBI:15379"/>
        <dbReference type="ChEBI" id="CHEBI:17499"/>
        <dbReference type="ChEBI" id="CHEBI:58562"/>
        <dbReference type="ChEBI" id="CHEBI:132087"/>
    </reaction>
    <physiologicalReaction direction="left-to-right" evidence="2">
        <dbReference type="Rhea" id="RHEA:50197"/>
    </physiologicalReaction>
</comment>
<comment type="catalytic activity">
    <reaction evidence="2">
        <text>(7Z,10Z,13Z,16Z,19Z)-docosapentaenoate + AH2 + O2 = 13R-hydroxy-(7Z,10Z,14E,16Z,19Z)-docosapentaenoate + A + H2O</text>
        <dbReference type="Rhea" id="RHEA:48852"/>
        <dbReference type="ChEBI" id="CHEBI:13193"/>
        <dbReference type="ChEBI" id="CHEBI:15377"/>
        <dbReference type="ChEBI" id="CHEBI:15379"/>
        <dbReference type="ChEBI" id="CHEBI:17499"/>
        <dbReference type="ChEBI" id="CHEBI:77224"/>
        <dbReference type="ChEBI" id="CHEBI:90824"/>
    </reaction>
    <physiologicalReaction direction="left-to-right" evidence="2">
        <dbReference type="Rhea" id="RHEA:48853"/>
    </physiologicalReaction>
</comment>
<comment type="catalytic activity">
    <reaction evidence="2">
        <text>(4Z,7Z,10Z,13Z,16Z,19Z)-docosahexaenoate + AH2 + O2 = 13-hydroxy-(4Z,7Z,10Z,14E,16Z,19Z)-docosahexaenoate + A + H2O</text>
        <dbReference type="Rhea" id="RHEA:48820"/>
        <dbReference type="ChEBI" id="CHEBI:13193"/>
        <dbReference type="ChEBI" id="CHEBI:15377"/>
        <dbReference type="ChEBI" id="CHEBI:15379"/>
        <dbReference type="ChEBI" id="CHEBI:17499"/>
        <dbReference type="ChEBI" id="CHEBI:77016"/>
        <dbReference type="ChEBI" id="CHEBI:90815"/>
    </reaction>
    <physiologicalReaction direction="left-to-right" evidence="2">
        <dbReference type="Rhea" id="RHEA:48821"/>
    </physiologicalReaction>
</comment>
<comment type="catalytic activity">
    <reaction evidence="2">
        <text>(5S)-hydroxy-(6E,8Z,11Z,14Z)-eicosatetraenoate + AH2 + O2 = (5S,15R)-dihydroxy-(6E,8Z,11Z,13E)-eicosatetraenoate + A + H2O</text>
        <dbReference type="Rhea" id="RHEA:48812"/>
        <dbReference type="ChEBI" id="CHEBI:13193"/>
        <dbReference type="ChEBI" id="CHEBI:15377"/>
        <dbReference type="ChEBI" id="CHEBI:15379"/>
        <dbReference type="ChEBI" id="CHEBI:17499"/>
        <dbReference type="ChEBI" id="CHEBI:90632"/>
        <dbReference type="ChEBI" id="CHEBI:90812"/>
    </reaction>
    <physiologicalReaction direction="left-to-right" evidence="2">
        <dbReference type="Rhea" id="RHEA:48813"/>
    </physiologicalReaction>
</comment>
<comment type="catalytic activity">
    <reaction evidence="2">
        <text>(4Z,7Z,10Z,13Z,16Z,19Z)-docosahexaenoate + AH2 + O2 = 17R-hydroxy-(4Z,7Z,10Z,13Z,15E,19Z)-docosahexaenoate + A + H2O</text>
        <dbReference type="Rhea" id="RHEA:48816"/>
        <dbReference type="ChEBI" id="CHEBI:13193"/>
        <dbReference type="ChEBI" id="CHEBI:15377"/>
        <dbReference type="ChEBI" id="CHEBI:15379"/>
        <dbReference type="ChEBI" id="CHEBI:17499"/>
        <dbReference type="ChEBI" id="CHEBI:77016"/>
        <dbReference type="ChEBI" id="CHEBI:90814"/>
    </reaction>
    <physiologicalReaction direction="left-to-right" evidence="2">
        <dbReference type="Rhea" id="RHEA:48817"/>
    </physiologicalReaction>
</comment>
<comment type="catalytic activity">
    <reaction evidence="2">
        <text>(5S)-hydroxy-(6E,8Z,11Z,14Z)-eicosatetraenoate + AH2 + O2 = (5S,15S)-dihydroxy-(6E,8Z,11Z,13E)-eicosatetraenoate + A + H2O</text>
        <dbReference type="Rhea" id="RHEA:48808"/>
        <dbReference type="ChEBI" id="CHEBI:13193"/>
        <dbReference type="ChEBI" id="CHEBI:15377"/>
        <dbReference type="ChEBI" id="CHEBI:15379"/>
        <dbReference type="ChEBI" id="CHEBI:17499"/>
        <dbReference type="ChEBI" id="CHEBI:90632"/>
        <dbReference type="ChEBI" id="CHEBI:90813"/>
    </reaction>
    <physiologicalReaction direction="left-to-right" evidence="2">
        <dbReference type="Rhea" id="RHEA:48809"/>
    </physiologicalReaction>
</comment>
<comment type="catalytic activity">
    <reaction evidence="2">
        <text>(5S)-hydroxy-(6E,8Z,11Z,14Z)-eicosatetraenoate + AH2 + O2 = (5S,11R)-dihydroxy-(6E,8Z,12E,14Z)-eicosatetraenoate + A + H2O</text>
        <dbReference type="Rhea" id="RHEA:48804"/>
        <dbReference type="ChEBI" id="CHEBI:13193"/>
        <dbReference type="ChEBI" id="CHEBI:15377"/>
        <dbReference type="ChEBI" id="CHEBI:15379"/>
        <dbReference type="ChEBI" id="CHEBI:17499"/>
        <dbReference type="ChEBI" id="CHEBI:90632"/>
        <dbReference type="ChEBI" id="CHEBI:90810"/>
    </reaction>
    <physiologicalReaction direction="left-to-right" evidence="2">
        <dbReference type="Rhea" id="RHEA:48805"/>
    </physiologicalReaction>
</comment>
<comment type="catalytic activity">
    <reaction evidence="2">
        <text>2-(5Z,8Z,11Z,14Z-eicosatetraenoyl)-glycerol + 2 O2 = 2-glyceryl-prostaglandin G2</text>
        <dbReference type="Rhea" id="RHEA:45288"/>
        <dbReference type="ChEBI" id="CHEBI:15379"/>
        <dbReference type="ChEBI" id="CHEBI:52392"/>
        <dbReference type="ChEBI" id="CHEBI:85165"/>
    </reaction>
    <physiologicalReaction direction="left-to-right" evidence="2">
        <dbReference type="Rhea" id="RHEA:45289"/>
    </physiologicalReaction>
</comment>
<comment type="catalytic activity">
    <reaction evidence="2">
        <text>2-glyceryl-prostaglandin G2 + AH2 = 2-glyceryl-prostaglandin H2 + A + H2O</text>
        <dbReference type="Rhea" id="RHEA:45292"/>
        <dbReference type="ChEBI" id="CHEBI:13193"/>
        <dbReference type="ChEBI" id="CHEBI:15377"/>
        <dbReference type="ChEBI" id="CHEBI:17499"/>
        <dbReference type="ChEBI" id="CHEBI:85165"/>
        <dbReference type="ChEBI" id="CHEBI:85166"/>
    </reaction>
    <physiologicalReaction direction="left-to-right" evidence="2">
        <dbReference type="Rhea" id="RHEA:45293"/>
    </physiologicalReaction>
</comment>
<comment type="catalytic activity">
    <reaction evidence="2">
        <text>(5Z,8Z,11Z,14Z)-eicosatetraenoate + O2 = (15R)-hydroperoxy-(5Z,8Z,11Z,13E)-eicosatetraenoate</text>
        <dbReference type="Rhea" id="RHEA:42284"/>
        <dbReference type="ChEBI" id="CHEBI:15379"/>
        <dbReference type="ChEBI" id="CHEBI:32395"/>
        <dbReference type="ChEBI" id="CHEBI:82626"/>
    </reaction>
    <physiologicalReaction direction="left-to-right" evidence="2">
        <dbReference type="Rhea" id="RHEA:42285"/>
    </physiologicalReaction>
</comment>
<comment type="catalytic activity">
    <reaction evidence="2">
        <text>(5Z,8Z,11Z,14Z)-eicosatetraenoate + O2 = 11R-hydroperoxy-(5Z,8Z,12E,14Z)-eicosatetraenoate</text>
        <dbReference type="Rhea" id="RHEA:42280"/>
        <dbReference type="ChEBI" id="CHEBI:15379"/>
        <dbReference type="ChEBI" id="CHEBI:32395"/>
        <dbReference type="ChEBI" id="CHEBI:82628"/>
    </reaction>
    <physiologicalReaction direction="left-to-right" evidence="2">
        <dbReference type="Rhea" id="RHEA:42281"/>
    </physiologicalReaction>
</comment>
<comment type="catalytic activity">
    <reaction evidence="3">
        <text>(9Z,12Z)-octadecadienoate + AH2 + O2 = (9R)-hydroxy-(10E,12Z)-octadecadienoate + A + H2O</text>
        <dbReference type="Rhea" id="RHEA:75447"/>
        <dbReference type="ChEBI" id="CHEBI:13193"/>
        <dbReference type="ChEBI" id="CHEBI:15377"/>
        <dbReference type="ChEBI" id="CHEBI:15379"/>
        <dbReference type="ChEBI" id="CHEBI:17499"/>
        <dbReference type="ChEBI" id="CHEBI:30245"/>
        <dbReference type="ChEBI" id="CHEBI:77895"/>
    </reaction>
    <physiologicalReaction direction="left-to-right" evidence="3">
        <dbReference type="Rhea" id="RHEA:75448"/>
    </physiologicalReaction>
</comment>
<comment type="catalytic activity">
    <reaction evidence="3">
        <text>(9Z,12Z)-octadecadienoate + AH2 + O2 = (9S)-hydroxy-(10E,12Z)-octadecadienoate + A + H2O</text>
        <dbReference type="Rhea" id="RHEA:75459"/>
        <dbReference type="ChEBI" id="CHEBI:13193"/>
        <dbReference type="ChEBI" id="CHEBI:15377"/>
        <dbReference type="ChEBI" id="CHEBI:15379"/>
        <dbReference type="ChEBI" id="CHEBI:17499"/>
        <dbReference type="ChEBI" id="CHEBI:30245"/>
        <dbReference type="ChEBI" id="CHEBI:77852"/>
    </reaction>
    <physiologicalReaction direction="left-to-right" evidence="3">
        <dbReference type="Rhea" id="RHEA:75460"/>
    </physiologicalReaction>
</comment>
<comment type="catalytic activity">
    <reaction evidence="3">
        <text>(9Z,12Z)-octadecadienoate + AH2 + O2 = (13S)-hydroxy-(9Z,11E)-octadecadienoate + A + H2O</text>
        <dbReference type="Rhea" id="RHEA:75451"/>
        <dbReference type="ChEBI" id="CHEBI:13193"/>
        <dbReference type="ChEBI" id="CHEBI:15377"/>
        <dbReference type="ChEBI" id="CHEBI:15379"/>
        <dbReference type="ChEBI" id="CHEBI:17499"/>
        <dbReference type="ChEBI" id="CHEBI:30245"/>
        <dbReference type="ChEBI" id="CHEBI:90850"/>
    </reaction>
    <physiologicalReaction direction="left-to-right" evidence="3">
        <dbReference type="Rhea" id="RHEA:75452"/>
    </physiologicalReaction>
</comment>
<comment type="catalytic activity">
    <reaction evidence="3">
        <text>(9Z,12Z)-octadecadienoate + AH2 + O2 = (13R)-hydroxy-(9Z,11E)-octadecadienoate + A + H2O</text>
        <dbReference type="Rhea" id="RHEA:75455"/>
        <dbReference type="ChEBI" id="CHEBI:13193"/>
        <dbReference type="ChEBI" id="CHEBI:15377"/>
        <dbReference type="ChEBI" id="CHEBI:15379"/>
        <dbReference type="ChEBI" id="CHEBI:17499"/>
        <dbReference type="ChEBI" id="CHEBI:30245"/>
        <dbReference type="ChEBI" id="CHEBI:136655"/>
    </reaction>
    <physiologicalReaction direction="left-to-right" evidence="3">
        <dbReference type="Rhea" id="RHEA:75456"/>
    </physiologicalReaction>
</comment>
<comment type="cofactor">
    <cofactor evidence="4">
        <name>heme b</name>
        <dbReference type="ChEBI" id="CHEBI:60344"/>
    </cofactor>
    <text evidence="4">Binds 1 heme b (iron(II)-protoporphyrin IX) group per subunit.</text>
</comment>
<comment type="pathway">
    <text evidence="2">Lipid metabolism; prostaglandin biosynthesis.</text>
</comment>
<comment type="subunit">
    <text evidence="4">Homodimer.</text>
</comment>
<comment type="subcellular location">
    <subcellularLocation>
        <location evidence="2">Microsome membrane</location>
        <topology evidence="2">Peripheral membrane protein</topology>
    </subcellularLocation>
    <subcellularLocation>
        <location evidence="2">Endoplasmic reticulum membrane</location>
        <topology evidence="2">Peripheral membrane protein</topology>
    </subcellularLocation>
    <subcellularLocation>
        <location evidence="2">Nucleus inner membrane</location>
        <topology evidence="2">Peripheral membrane protein</topology>
    </subcellularLocation>
    <subcellularLocation>
        <location evidence="2">Nucleus outer membrane</location>
        <topology evidence="2">Peripheral membrane protein</topology>
    </subcellularLocation>
    <text evidence="2">Detected on the lumenal side of the endoplasmic reticulum and nuclear envelope.</text>
</comment>
<comment type="PTM">
    <text evidence="2">S-nitrosylation by NOS2 (iNOS) activates enzyme activity. S-nitrosylation may take place on different Cys residues in addition to Cys-526.</text>
</comment>
<comment type="PTM">
    <text evidence="4">Acetylated at Ser-565 by SPHK1. During neuroinflammation, acetylation by SPHK1 promotes neuronal secretion of specialized preresolving mediators (SPMs), especially 15-R-lipoxin A4, which results in an increase of phagocytic microglia.</text>
</comment>
<comment type="miscellaneous">
    <text>The conversion of arachidonate to prostaglandin H2 is a 2 step reaction: a cyclooxygenase (COX) reaction which converts arachidonate to prostaglandin G2 (PGG2) and a peroxidase reaction in which PGG2 is reduced to prostaglandin H2 (PGH2). The cyclooxygenase reaction occurs in a hydrophobic channel in the core of the enzyme. The peroxidase reaction occurs at a heme-containing active site located near the protein surface. The nonsteroidal anti-inflammatory drugs (NSAIDs) binding site corresponds to the cyclooxygenase active site.</text>
</comment>
<comment type="miscellaneous">
    <text>Conversion of arachidonate to prostaglandin H2 is mediated by 2 different isozymes: the constitutive PTGS1 and the inducible PTGS2. PTGS1 is expressed constitutively and generally produces prostanoids acutely in response to hormonal stimuli to fine-tune physiological processes requiring instantaneous, continuous regulation (e.g. hemostasis). PTGS2 is inducible and typically produces prostanoids that mediate responses to physiological stresses such as infection and inflammation.</text>
</comment>
<comment type="miscellaneous">
    <text>PTGS1 and PTGS2 are the targets of nonsteroidal anti-inflammatory drugs (NSAIDs) including aspirin and ibuprofen. Aspirin is able to produce an irreversible inactivation of the enzyme through a serine acetylation. Inhibition of the PGHSs with NSAIDs acutely reduces inflammation, pain, and fever, and long-term use of these drugs reduces fatal thrombotic events, as well as the development of colon cancer and Alzheimer's disease. PTGS2 is the principal isozyme responsible for production of inflammatory prostaglandins. New generation PTGSs inhibitors strive to be selective for PTGS2, to avoid side effects such as gastrointestinal complications and ulceration.</text>
</comment>
<comment type="similarity">
    <text evidence="8">Belongs to the prostaglandin G/H synthase family.</text>
</comment>
<proteinExistence type="evidence at transcript level"/>
<name>PGH2_BOVIN</name>
<sequence>MLARALLLCAAVALSGAANPCCSHPCQNRGVCMSVGFDQYKCDCTRTGFYGENCTTPEFLTRIKLLLKPTPNTVHYILTHFKGVWNIVNKISFLRNMIMRYVLTSRSHLIESPPTYNVHYSYKSWEAFSNLSYYTRALPPVPDDCPTPMGVKGRKELPDSKEVVKKVLLRRKFIPDPQGTNLMFAFFAQHFTHQFFKTDFERGPAFTKGKNHGVDLSHIYGESLERQHKLRLFKDGKMKYQMINGEMYPPTVKDTQVEMIYPPHVPEHLKFAVGQEVFGLVPGLMMYATIWLREHNRVCDVLKQEHPEWGDEQLFQTSRLILIGETIKIVIEDYVQHLSGYHFKLKFDPELLFNQQFQYQNRIAAEFNTLYHWHPLLPDVFQIDGQEYNYQQFIYNNSVLLEHGLTQFVESFTRQRAGRVAGGRNLPVAVEKVSKASIDQSREMKYQSFNEYRKRFLVKPYESFEELTGEKEMAAELEALYGDIDAMEFYPALLVEKPRPDAIFGETMVEAGAPFSLKGLMGNPICSPEYWKPSTFGGEVGFKIINTASIQSLICSNVKGCPFTSFSVQDTHLTKTVTINASSSHSGLDDINPTVLLKERSTEL</sequence>
<protein>
    <recommendedName>
        <fullName>Prostaglandin G/H synthase 2</fullName>
        <ecNumber>1.14.99.1</ecNumber>
    </recommendedName>
    <alternativeName>
        <fullName>Cyclooxygenase-2</fullName>
        <shortName>COX-2</shortName>
    </alternativeName>
    <alternativeName>
        <fullName>PHS II</fullName>
    </alternativeName>
    <alternativeName>
        <fullName>Prostaglandin H2 synthase 2</fullName>
        <shortName>PGH synthase 2</shortName>
        <shortName>PGHS-2</shortName>
    </alternativeName>
    <alternativeName>
        <fullName>Prostaglandin-endoperoxide synthase 2</fullName>
    </alternativeName>
</protein>
<evidence type="ECO:0000250" key="1"/>
<evidence type="ECO:0000250" key="2">
    <source>
        <dbReference type="UniProtKB" id="P35354"/>
    </source>
</evidence>
<evidence type="ECO:0000250" key="3">
    <source>
        <dbReference type="UniProtKB" id="P79208"/>
    </source>
</evidence>
<evidence type="ECO:0000250" key="4">
    <source>
        <dbReference type="UniProtKB" id="Q05769"/>
    </source>
</evidence>
<evidence type="ECO:0000255" key="5"/>
<evidence type="ECO:0000255" key="6">
    <source>
        <dbReference type="PROSITE-ProRule" id="PRU00076"/>
    </source>
</evidence>
<evidence type="ECO:0000255" key="7">
    <source>
        <dbReference type="PROSITE-ProRule" id="PRU00298"/>
    </source>
</evidence>
<evidence type="ECO:0000305" key="8"/>
<gene>
    <name type="primary">PTGS2</name>
    <name type="synonym">COX2</name>
</gene>
<organism>
    <name type="scientific">Bos taurus</name>
    <name type="common">Bovine</name>
    <dbReference type="NCBI Taxonomy" id="9913"/>
    <lineage>
        <taxon>Eukaryota</taxon>
        <taxon>Metazoa</taxon>
        <taxon>Chordata</taxon>
        <taxon>Craniata</taxon>
        <taxon>Vertebrata</taxon>
        <taxon>Euteleostomi</taxon>
        <taxon>Mammalia</taxon>
        <taxon>Eutheria</taxon>
        <taxon>Laurasiatheria</taxon>
        <taxon>Artiodactyla</taxon>
        <taxon>Ruminantia</taxon>
        <taxon>Pecora</taxon>
        <taxon>Bovidae</taxon>
        <taxon>Bovinae</taxon>
        <taxon>Bos</taxon>
    </lineage>
</organism>
<feature type="signal peptide" evidence="1">
    <location>
        <begin position="1"/>
        <end position="17"/>
    </location>
</feature>
<feature type="chain" id="PRO_0000023872" description="Prostaglandin G/H synthase 2">
    <location>
        <begin position="18"/>
        <end position="604"/>
    </location>
</feature>
<feature type="domain" description="EGF-like" evidence="6">
    <location>
        <begin position="18"/>
        <end position="55"/>
    </location>
</feature>
<feature type="active site" description="Proton acceptor" evidence="7">
    <location>
        <position position="193"/>
    </location>
</feature>
<feature type="active site" description="For cyclooxygenase activity" evidence="4">
    <location>
        <position position="371"/>
    </location>
</feature>
<feature type="binding site" evidence="4">
    <location>
        <position position="106"/>
    </location>
    <ligand>
        <name>substrate</name>
    </ligand>
</feature>
<feature type="binding site" evidence="4">
    <location>
        <position position="341"/>
    </location>
    <ligand>
        <name>substrate</name>
    </ligand>
</feature>
<feature type="binding site" description="axial binding residue" evidence="7">
    <location>
        <position position="374"/>
    </location>
    <ligand>
        <name>heme b</name>
        <dbReference type="ChEBI" id="CHEBI:60344"/>
    </ligand>
    <ligandPart>
        <name>Fe</name>
        <dbReference type="ChEBI" id="CHEBI:18248"/>
    </ligandPart>
</feature>
<feature type="site" description="Aspirin-acetylated serine" evidence="2">
    <location>
        <position position="516"/>
    </location>
</feature>
<feature type="modified residue" description="S-nitrosocysteine" evidence="2">
    <location>
        <position position="526"/>
    </location>
</feature>
<feature type="modified residue" description="O-acetylserine" evidence="4">
    <location>
        <position position="565"/>
    </location>
</feature>
<feature type="glycosylation site" description="N-linked (GlcNAc...) asparagine" evidence="5">
    <location>
        <position position="53"/>
    </location>
</feature>
<feature type="glycosylation site" description="N-linked (GlcNAc...) asparagine" evidence="5">
    <location>
        <position position="130"/>
    </location>
</feature>
<feature type="glycosylation site" description="N-linked (GlcNAc...) asparagine" evidence="5">
    <location>
        <position position="396"/>
    </location>
</feature>
<feature type="glycosylation site" description="N-linked (GlcNAc...) asparagine" evidence="5">
    <location>
        <position position="580"/>
    </location>
</feature>
<feature type="disulfide bond" evidence="4">
    <location>
        <begin position="21"/>
        <end position="32"/>
    </location>
</feature>
<feature type="disulfide bond" evidence="4">
    <location>
        <begin position="22"/>
        <end position="145"/>
    </location>
</feature>
<feature type="disulfide bond" evidence="4">
    <location>
        <begin position="26"/>
        <end position="42"/>
    </location>
</feature>
<feature type="disulfide bond" evidence="4">
    <location>
        <begin position="44"/>
        <end position="54"/>
    </location>
</feature>
<feature type="disulfide bond" evidence="4">
    <location>
        <begin position="555"/>
        <end position="561"/>
    </location>
</feature>
<feature type="sequence conflict" description="In Ref. 1; AAC28562." evidence="8" ref="1">
    <original>L</original>
    <variation>M</variation>
    <location>
        <position position="6"/>
    </location>
</feature>
<feature type="sequence conflict" description="In Ref. 2; AAC05592." evidence="8" ref="2">
    <original>E</original>
    <variation>D</variation>
    <location>
        <position position="111"/>
    </location>
</feature>
<feature type="sequence conflict" description="In Ref. 1; AAC28562." evidence="8" ref="1">
    <original>V</original>
    <variation>L</variation>
    <location>
        <position position="458"/>
    </location>
</feature>
<dbReference type="EC" id="1.14.99.1"/>
<dbReference type="EMBL" id="AF031698">
    <property type="protein sequence ID" value="AAC04702.1"/>
    <property type="molecule type" value="mRNA"/>
</dbReference>
<dbReference type="EMBL" id="AF031699">
    <property type="protein sequence ID" value="AAC28562.1"/>
    <property type="molecule type" value="Genomic_DNA"/>
</dbReference>
<dbReference type="EMBL" id="AF004944">
    <property type="protein sequence ID" value="AAC05592.1"/>
    <property type="molecule type" value="mRNA"/>
</dbReference>
<dbReference type="RefSeq" id="NP_776870.1">
    <property type="nucleotide sequence ID" value="NM_174445.2"/>
</dbReference>
<dbReference type="SMR" id="O62698"/>
<dbReference type="FunCoup" id="O62698">
    <property type="interactions" value="310"/>
</dbReference>
<dbReference type="STRING" id="9913.ENSBTAP00000018774"/>
<dbReference type="BindingDB" id="O62698"/>
<dbReference type="ChEMBL" id="CHEMBL3331"/>
<dbReference type="DrugCentral" id="O62698"/>
<dbReference type="PeroxiBase" id="3330">
    <property type="entry name" value="BtPGHS02"/>
</dbReference>
<dbReference type="GlyCosmos" id="O62698">
    <property type="glycosylation" value="4 sites, No reported glycans"/>
</dbReference>
<dbReference type="GlyGen" id="O62698">
    <property type="glycosylation" value="4 sites"/>
</dbReference>
<dbReference type="PaxDb" id="9913-ENSBTAP00000018774"/>
<dbReference type="GeneID" id="282023"/>
<dbReference type="KEGG" id="bta:282023"/>
<dbReference type="CTD" id="5743"/>
<dbReference type="eggNOG" id="KOG2408">
    <property type="taxonomic scope" value="Eukaryota"/>
</dbReference>
<dbReference type="InParanoid" id="O62698"/>
<dbReference type="OrthoDB" id="823504at2759"/>
<dbReference type="BRENDA" id="1.14.99.1">
    <property type="organism ID" value="908"/>
</dbReference>
<dbReference type="UniPathway" id="UPA00662"/>
<dbReference type="PRO" id="PR:O62698"/>
<dbReference type="Proteomes" id="UP000009136">
    <property type="component" value="Unplaced"/>
</dbReference>
<dbReference type="GO" id="GO:0005737">
    <property type="term" value="C:cytoplasm"/>
    <property type="evidence" value="ECO:0000318"/>
    <property type="project" value="GO_Central"/>
</dbReference>
<dbReference type="GO" id="GO:0005789">
    <property type="term" value="C:endoplasmic reticulum membrane"/>
    <property type="evidence" value="ECO:0007669"/>
    <property type="project" value="UniProtKB-SubCell"/>
</dbReference>
<dbReference type="GO" id="GO:0043005">
    <property type="term" value="C:neuron projection"/>
    <property type="evidence" value="ECO:0000318"/>
    <property type="project" value="GO_Central"/>
</dbReference>
<dbReference type="GO" id="GO:0005637">
    <property type="term" value="C:nuclear inner membrane"/>
    <property type="evidence" value="ECO:0000250"/>
    <property type="project" value="UniProtKB"/>
</dbReference>
<dbReference type="GO" id="GO:0005640">
    <property type="term" value="C:nuclear outer membrane"/>
    <property type="evidence" value="ECO:0000250"/>
    <property type="project" value="UniProtKB"/>
</dbReference>
<dbReference type="GO" id="GO:0020037">
    <property type="term" value="F:heme binding"/>
    <property type="evidence" value="ECO:0000250"/>
    <property type="project" value="UniProtKB"/>
</dbReference>
<dbReference type="GO" id="GO:0046872">
    <property type="term" value="F:metal ion binding"/>
    <property type="evidence" value="ECO:0007669"/>
    <property type="project" value="UniProtKB-KW"/>
</dbReference>
<dbReference type="GO" id="GO:0016702">
    <property type="term" value="F:oxidoreductase activity, acting on single donors with incorporation of molecular oxygen, incorporation of two atoms of oxygen"/>
    <property type="evidence" value="ECO:0000318"/>
    <property type="project" value="GO_Central"/>
</dbReference>
<dbReference type="GO" id="GO:0004601">
    <property type="term" value="F:peroxidase activity"/>
    <property type="evidence" value="ECO:0007669"/>
    <property type="project" value="UniProtKB-KW"/>
</dbReference>
<dbReference type="GO" id="GO:0004666">
    <property type="term" value="F:prostaglandin-endoperoxide synthase activity"/>
    <property type="evidence" value="ECO:0000250"/>
    <property type="project" value="UniProtKB"/>
</dbReference>
<dbReference type="GO" id="GO:0071347">
    <property type="term" value="P:cellular response to interleukin-1"/>
    <property type="evidence" value="ECO:0000315"/>
    <property type="project" value="AgBase"/>
</dbReference>
<dbReference type="GO" id="GO:0019371">
    <property type="term" value="P:cyclooxygenase pathway"/>
    <property type="evidence" value="ECO:0000250"/>
    <property type="project" value="UniProtKB"/>
</dbReference>
<dbReference type="GO" id="GO:0000212">
    <property type="term" value="P:meiotic spindle organization"/>
    <property type="evidence" value="ECO:0000315"/>
    <property type="project" value="AgBase"/>
</dbReference>
<dbReference type="GO" id="GO:0001550">
    <property type="term" value="P:ovarian cumulus expansion"/>
    <property type="evidence" value="ECO:0000315"/>
    <property type="project" value="AgBase"/>
</dbReference>
<dbReference type="GO" id="GO:0040019">
    <property type="term" value="P:positive regulation of embryonic development"/>
    <property type="evidence" value="ECO:0000315"/>
    <property type="project" value="AgBase"/>
</dbReference>
<dbReference type="GO" id="GO:1904146">
    <property type="term" value="P:positive regulation of meiotic cell cycle process involved in oocyte maturation"/>
    <property type="evidence" value="ECO:0000315"/>
    <property type="project" value="AgBase"/>
</dbReference>
<dbReference type="GO" id="GO:1900195">
    <property type="term" value="P:positive regulation of oocyte maturation"/>
    <property type="evidence" value="ECO:0000315"/>
    <property type="project" value="AgBase"/>
</dbReference>
<dbReference type="GO" id="GO:0001934">
    <property type="term" value="P:positive regulation of protein phosphorylation"/>
    <property type="evidence" value="ECO:0000315"/>
    <property type="project" value="AgBase"/>
</dbReference>
<dbReference type="GO" id="GO:0001516">
    <property type="term" value="P:prostaglandin biosynthetic process"/>
    <property type="evidence" value="ECO:0000315"/>
    <property type="project" value="AgBase"/>
</dbReference>
<dbReference type="GO" id="GO:0150077">
    <property type="term" value="P:regulation of neuroinflammatory response"/>
    <property type="evidence" value="ECO:0000250"/>
    <property type="project" value="UniProtKB"/>
</dbReference>
<dbReference type="GO" id="GO:0006979">
    <property type="term" value="P:response to oxidative stress"/>
    <property type="evidence" value="ECO:0007669"/>
    <property type="project" value="InterPro"/>
</dbReference>
<dbReference type="CDD" id="cd00054">
    <property type="entry name" value="EGF_CA"/>
    <property type="match status" value="1"/>
</dbReference>
<dbReference type="CDD" id="cd09816">
    <property type="entry name" value="prostaglandin_endoperoxide_synthase"/>
    <property type="match status" value="1"/>
</dbReference>
<dbReference type="FunFam" id="1.10.640.10:FF:000002">
    <property type="entry name" value="Prostaglandin G/H synthase 2"/>
    <property type="match status" value="1"/>
</dbReference>
<dbReference type="FunFam" id="2.10.25.10:FF:000235">
    <property type="entry name" value="Prostaglandin G/H synthase 2"/>
    <property type="match status" value="1"/>
</dbReference>
<dbReference type="Gene3D" id="1.10.640.10">
    <property type="entry name" value="Haem peroxidase domain superfamily, animal type"/>
    <property type="match status" value="1"/>
</dbReference>
<dbReference type="Gene3D" id="2.10.25.10">
    <property type="entry name" value="Laminin"/>
    <property type="match status" value="1"/>
</dbReference>
<dbReference type="InterPro" id="IPR000742">
    <property type="entry name" value="EGF-like_dom"/>
</dbReference>
<dbReference type="InterPro" id="IPR019791">
    <property type="entry name" value="Haem_peroxidase_animal"/>
</dbReference>
<dbReference type="InterPro" id="IPR010255">
    <property type="entry name" value="Haem_peroxidase_sf"/>
</dbReference>
<dbReference type="InterPro" id="IPR037120">
    <property type="entry name" value="Haem_peroxidase_sf_animal"/>
</dbReference>
<dbReference type="InterPro" id="IPR050783">
    <property type="entry name" value="Oxylipin_biosynth_metab"/>
</dbReference>
<dbReference type="PANTHER" id="PTHR11903">
    <property type="entry name" value="PROSTAGLANDIN G/H SYNTHASE"/>
    <property type="match status" value="1"/>
</dbReference>
<dbReference type="PANTHER" id="PTHR11903:SF8">
    <property type="entry name" value="PROSTAGLANDIN G_H SYNTHASE 2"/>
    <property type="match status" value="1"/>
</dbReference>
<dbReference type="Pfam" id="PF03098">
    <property type="entry name" value="An_peroxidase"/>
    <property type="match status" value="1"/>
</dbReference>
<dbReference type="PRINTS" id="PR00457">
    <property type="entry name" value="ANPEROXIDASE"/>
</dbReference>
<dbReference type="SUPFAM" id="SSF57196">
    <property type="entry name" value="EGF/Laminin"/>
    <property type="match status" value="1"/>
</dbReference>
<dbReference type="SUPFAM" id="SSF48113">
    <property type="entry name" value="Heme-dependent peroxidases"/>
    <property type="match status" value="1"/>
</dbReference>
<dbReference type="PROSITE" id="PS50026">
    <property type="entry name" value="EGF_3"/>
    <property type="match status" value="1"/>
</dbReference>
<dbReference type="PROSITE" id="PS50292">
    <property type="entry name" value="PEROXIDASE_3"/>
    <property type="match status" value="1"/>
</dbReference>
<reference key="1">
    <citation type="journal article" date="2001" name="Biol. Reprod.">
        <title>Molecular characterization of bovine prostaglandin G/H synthase-2 and regulation in uterine stromal cells.</title>
        <authorList>
            <person name="Liu J."/>
            <person name="Antaya M."/>
            <person name="Goff A.K."/>
            <person name="Boerboom D."/>
            <person name="Silversides D.W."/>
            <person name="Lussier J.G."/>
            <person name="Sirois J."/>
        </authorList>
    </citation>
    <scope>NUCLEOTIDE SEQUENCE [MRNA]</scope>
</reference>
<reference key="2">
    <citation type="journal article" date="1997" name="Endocrinology">
        <title>Cellular mechanisms involved during oxytocin-induced prostaglandin F2alpha production in endometrial epithelial cells in vitro: role of cyclooxygenase-2.</title>
        <authorList>
            <person name="Asselin E."/>
            <person name="Drolet P."/>
            <person name="Fortier M.A."/>
        </authorList>
    </citation>
    <scope>NUCLEOTIDE SEQUENCE [MRNA] OF 105-253</scope>
</reference>
<keyword id="KW-0007">Acetylation</keyword>
<keyword id="KW-0223">Dioxygenase</keyword>
<keyword id="KW-1015">Disulfide bond</keyword>
<keyword id="KW-0256">Endoplasmic reticulum</keyword>
<keyword id="KW-0275">Fatty acid biosynthesis</keyword>
<keyword id="KW-0276">Fatty acid metabolism</keyword>
<keyword id="KW-0325">Glycoprotein</keyword>
<keyword id="KW-0349">Heme</keyword>
<keyword id="KW-0408">Iron</keyword>
<keyword id="KW-0444">Lipid biosynthesis</keyword>
<keyword id="KW-0443">Lipid metabolism</keyword>
<keyword id="KW-0472">Membrane</keyword>
<keyword id="KW-0479">Metal-binding</keyword>
<keyword id="KW-0492">Microsome</keyword>
<keyword id="KW-0539">Nucleus</keyword>
<keyword id="KW-0560">Oxidoreductase</keyword>
<keyword id="KW-0575">Peroxidase</keyword>
<keyword id="KW-0643">Prostaglandin biosynthesis</keyword>
<keyword id="KW-0644">Prostaglandin metabolism</keyword>
<keyword id="KW-1185">Reference proteome</keyword>
<keyword id="KW-0702">S-nitrosylation</keyword>
<keyword id="KW-0732">Signal</keyword>
<accession>O62698</accession>
<accession>O46517</accession>
<accession>O62665</accession>